<evidence type="ECO:0000255" key="1">
    <source>
        <dbReference type="HAMAP-Rule" id="MF_01035"/>
    </source>
</evidence>
<feature type="chain" id="PRO_1000149453" description="3-isopropylmalate dehydrogenase">
    <location>
        <begin position="1"/>
        <end position="336"/>
    </location>
</feature>
<feature type="binding site" evidence="1">
    <location>
        <position position="87"/>
    </location>
    <ligand>
        <name>substrate</name>
    </ligand>
</feature>
<feature type="binding site" evidence="1">
    <location>
        <position position="97"/>
    </location>
    <ligand>
        <name>substrate</name>
    </ligand>
</feature>
<feature type="binding site" evidence="1">
    <location>
        <position position="121"/>
    </location>
    <ligand>
        <name>substrate</name>
    </ligand>
</feature>
<feature type="binding site" evidence="1">
    <location>
        <position position="211"/>
    </location>
    <ligand>
        <name>Mg(2+)</name>
        <dbReference type="ChEBI" id="CHEBI:18420"/>
    </ligand>
</feature>
<feature type="binding site" evidence="1">
    <location>
        <position position="211"/>
    </location>
    <ligand>
        <name>substrate</name>
    </ligand>
</feature>
<feature type="binding site" evidence="1">
    <location>
        <position position="235"/>
    </location>
    <ligand>
        <name>Mg(2+)</name>
        <dbReference type="ChEBI" id="CHEBI:18420"/>
    </ligand>
</feature>
<feature type="binding site" evidence="1">
    <location>
        <position position="239"/>
    </location>
    <ligand>
        <name>Mg(2+)</name>
        <dbReference type="ChEBI" id="CHEBI:18420"/>
    </ligand>
</feature>
<feature type="binding site" evidence="1">
    <location>
        <begin position="271"/>
        <end position="283"/>
    </location>
    <ligand>
        <name>NAD(+)</name>
        <dbReference type="ChEBI" id="CHEBI:57540"/>
    </ligand>
</feature>
<feature type="site" description="Important for catalysis" evidence="1">
    <location>
        <position position="128"/>
    </location>
</feature>
<feature type="site" description="Important for catalysis" evidence="1">
    <location>
        <position position="178"/>
    </location>
</feature>
<organism>
    <name type="scientific">Rhodococcus opacus (strain B4)</name>
    <dbReference type="NCBI Taxonomy" id="632772"/>
    <lineage>
        <taxon>Bacteria</taxon>
        <taxon>Bacillati</taxon>
        <taxon>Actinomycetota</taxon>
        <taxon>Actinomycetes</taxon>
        <taxon>Mycobacteriales</taxon>
        <taxon>Nocardiaceae</taxon>
        <taxon>Rhodococcus</taxon>
    </lineage>
</organism>
<sequence length="336" mass="35359">MKLAVIPGDGIGVEVTAEALKVLRKLVPDLETTEYDLGARRYNATGELLPDADLAAIREHDAILLGAIGDPSVTPGVLERGLLLNMRFALDHHVNLRPSQLYPGSKSPLAAQPDIDFVVVREGTEGPYTGNGGAIRVGTPHEIATEVSINTWFGAERVVRYAFALAQTRRKHVTLIHKTNVLSNAGAIWTRAVETVSAEYPDVETAYCHIDAATIYMVTDPSRFDVIVTDNLFGDIITDLAGAVTGGIGLAASGNIDASGTNPSMFEPVHGSAPDIAGQGIADPTAAILSAALLLRHLGRDGDAARIETAVEADLASRGDSKVVTSEVGDRIAAAL</sequence>
<gene>
    <name evidence="1" type="primary">leuB</name>
    <name type="ordered locus">ROP_65430</name>
</gene>
<reference key="1">
    <citation type="submission" date="2009-03" db="EMBL/GenBank/DDBJ databases">
        <title>Comparison of the complete genome sequences of Rhodococcus erythropolis PR4 and Rhodococcus opacus B4.</title>
        <authorList>
            <person name="Takarada H."/>
            <person name="Sekine M."/>
            <person name="Hosoyama A."/>
            <person name="Yamada R."/>
            <person name="Fujisawa T."/>
            <person name="Omata S."/>
            <person name="Shimizu A."/>
            <person name="Tsukatani N."/>
            <person name="Tanikawa S."/>
            <person name="Fujita N."/>
            <person name="Harayama S."/>
        </authorList>
    </citation>
    <scope>NUCLEOTIDE SEQUENCE [LARGE SCALE GENOMIC DNA]</scope>
    <source>
        <strain>B4</strain>
    </source>
</reference>
<protein>
    <recommendedName>
        <fullName evidence="1">3-isopropylmalate dehydrogenase</fullName>
        <ecNumber evidence="1">1.1.1.85</ecNumber>
    </recommendedName>
    <alternativeName>
        <fullName evidence="1">3-IPM-DH</fullName>
    </alternativeName>
    <alternativeName>
        <fullName evidence="1">Beta-IPM dehydrogenase</fullName>
        <shortName evidence="1">IMDH</shortName>
    </alternativeName>
</protein>
<comment type="function">
    <text evidence="1">Catalyzes the oxidation of 3-carboxy-2-hydroxy-4-methylpentanoate (3-isopropylmalate) to 3-carboxy-4-methyl-2-oxopentanoate. The product decarboxylates to 4-methyl-2 oxopentanoate.</text>
</comment>
<comment type="catalytic activity">
    <reaction evidence="1">
        <text>(2R,3S)-3-isopropylmalate + NAD(+) = 4-methyl-2-oxopentanoate + CO2 + NADH</text>
        <dbReference type="Rhea" id="RHEA:32271"/>
        <dbReference type="ChEBI" id="CHEBI:16526"/>
        <dbReference type="ChEBI" id="CHEBI:17865"/>
        <dbReference type="ChEBI" id="CHEBI:35121"/>
        <dbReference type="ChEBI" id="CHEBI:57540"/>
        <dbReference type="ChEBI" id="CHEBI:57945"/>
        <dbReference type="EC" id="1.1.1.85"/>
    </reaction>
</comment>
<comment type="cofactor">
    <cofactor evidence="1">
        <name>Mg(2+)</name>
        <dbReference type="ChEBI" id="CHEBI:18420"/>
    </cofactor>
    <cofactor evidence="1">
        <name>Mn(2+)</name>
        <dbReference type="ChEBI" id="CHEBI:29035"/>
    </cofactor>
    <text evidence="1">Binds 1 Mg(2+) or Mn(2+) ion per subunit.</text>
</comment>
<comment type="pathway">
    <text evidence="1">Amino-acid biosynthesis; L-leucine biosynthesis; L-leucine from 3-methyl-2-oxobutanoate: step 3/4.</text>
</comment>
<comment type="subunit">
    <text evidence="1">Homodimer.</text>
</comment>
<comment type="subcellular location">
    <subcellularLocation>
        <location evidence="1">Cytoplasm</location>
    </subcellularLocation>
</comment>
<comment type="similarity">
    <text evidence="1">Belongs to the isocitrate and isopropylmalate dehydrogenases family. LeuB type 2 subfamily.</text>
</comment>
<accession>C1B2M3</accession>
<name>LEU3_RHOOB</name>
<dbReference type="EC" id="1.1.1.85" evidence="1"/>
<dbReference type="EMBL" id="AP011115">
    <property type="protein sequence ID" value="BAH54790.1"/>
    <property type="molecule type" value="Genomic_DNA"/>
</dbReference>
<dbReference type="RefSeq" id="WP_015890236.1">
    <property type="nucleotide sequence ID" value="NC_012522.1"/>
</dbReference>
<dbReference type="SMR" id="C1B2M3"/>
<dbReference type="STRING" id="632772.ROP_65430"/>
<dbReference type="KEGG" id="rop:ROP_65430"/>
<dbReference type="PATRIC" id="fig|632772.20.peg.6829"/>
<dbReference type="HOGENOM" id="CLU_031953_0_1_11"/>
<dbReference type="OrthoDB" id="5289857at2"/>
<dbReference type="UniPathway" id="UPA00048">
    <property type="reaction ID" value="UER00072"/>
</dbReference>
<dbReference type="Proteomes" id="UP000002212">
    <property type="component" value="Chromosome"/>
</dbReference>
<dbReference type="GO" id="GO:0005737">
    <property type="term" value="C:cytoplasm"/>
    <property type="evidence" value="ECO:0007669"/>
    <property type="project" value="UniProtKB-SubCell"/>
</dbReference>
<dbReference type="GO" id="GO:0003862">
    <property type="term" value="F:3-isopropylmalate dehydrogenase activity"/>
    <property type="evidence" value="ECO:0007669"/>
    <property type="project" value="UniProtKB-UniRule"/>
</dbReference>
<dbReference type="GO" id="GO:0000287">
    <property type="term" value="F:magnesium ion binding"/>
    <property type="evidence" value="ECO:0007669"/>
    <property type="project" value="InterPro"/>
</dbReference>
<dbReference type="GO" id="GO:0051287">
    <property type="term" value="F:NAD binding"/>
    <property type="evidence" value="ECO:0007669"/>
    <property type="project" value="InterPro"/>
</dbReference>
<dbReference type="GO" id="GO:0009098">
    <property type="term" value="P:L-leucine biosynthetic process"/>
    <property type="evidence" value="ECO:0007669"/>
    <property type="project" value="UniProtKB-UniRule"/>
</dbReference>
<dbReference type="Gene3D" id="3.40.718.10">
    <property type="entry name" value="Isopropylmalate Dehydrogenase"/>
    <property type="match status" value="1"/>
</dbReference>
<dbReference type="HAMAP" id="MF_01035">
    <property type="entry name" value="LeuB_type2"/>
    <property type="match status" value="1"/>
</dbReference>
<dbReference type="InterPro" id="IPR050501">
    <property type="entry name" value="ICDH/IPMDH"/>
</dbReference>
<dbReference type="InterPro" id="IPR019818">
    <property type="entry name" value="IsoCit/isopropylmalate_DH_CS"/>
</dbReference>
<dbReference type="InterPro" id="IPR024084">
    <property type="entry name" value="IsoPropMal-DH-like_dom"/>
</dbReference>
<dbReference type="InterPro" id="IPR023698">
    <property type="entry name" value="LeuB_actb"/>
</dbReference>
<dbReference type="NCBIfam" id="NF002898">
    <property type="entry name" value="PRK03437.1"/>
    <property type="match status" value="1"/>
</dbReference>
<dbReference type="PANTHER" id="PTHR43275">
    <property type="entry name" value="D-MALATE DEHYDROGENASE [DECARBOXYLATING]"/>
    <property type="match status" value="1"/>
</dbReference>
<dbReference type="PANTHER" id="PTHR43275:SF1">
    <property type="entry name" value="D-MALATE DEHYDROGENASE [DECARBOXYLATING]"/>
    <property type="match status" value="1"/>
</dbReference>
<dbReference type="Pfam" id="PF00180">
    <property type="entry name" value="Iso_dh"/>
    <property type="match status" value="1"/>
</dbReference>
<dbReference type="SMART" id="SM01329">
    <property type="entry name" value="Iso_dh"/>
    <property type="match status" value="1"/>
</dbReference>
<dbReference type="SUPFAM" id="SSF53659">
    <property type="entry name" value="Isocitrate/Isopropylmalate dehydrogenase-like"/>
    <property type="match status" value="1"/>
</dbReference>
<dbReference type="PROSITE" id="PS00470">
    <property type="entry name" value="IDH_IMDH"/>
    <property type="match status" value="1"/>
</dbReference>
<keyword id="KW-0028">Amino-acid biosynthesis</keyword>
<keyword id="KW-0100">Branched-chain amino acid biosynthesis</keyword>
<keyword id="KW-0963">Cytoplasm</keyword>
<keyword id="KW-0432">Leucine biosynthesis</keyword>
<keyword id="KW-0460">Magnesium</keyword>
<keyword id="KW-0464">Manganese</keyword>
<keyword id="KW-0479">Metal-binding</keyword>
<keyword id="KW-0520">NAD</keyword>
<keyword id="KW-0560">Oxidoreductase</keyword>
<proteinExistence type="inferred from homology"/>